<proteinExistence type="inferred from homology"/>
<keyword id="KW-0963">Cytoplasm</keyword>
<keyword id="KW-0251">Elongation factor</keyword>
<keyword id="KW-0648">Protein biosynthesis</keyword>
<comment type="function">
    <text evidence="1">Associates with the EF-Tu.GDP complex and induces the exchange of GDP to GTP. It remains bound to the aminoacyl-tRNA.EF-Tu.GTP complex up to the GTP hydrolysis stage on the ribosome.</text>
</comment>
<comment type="subcellular location">
    <subcellularLocation>
        <location evidence="1">Cytoplasm</location>
    </subcellularLocation>
</comment>
<comment type="similarity">
    <text evidence="1">Belongs to the EF-Ts family.</text>
</comment>
<organism>
    <name type="scientific">Rickettsia massiliae (strain Mtu5)</name>
    <dbReference type="NCBI Taxonomy" id="416276"/>
    <lineage>
        <taxon>Bacteria</taxon>
        <taxon>Pseudomonadati</taxon>
        <taxon>Pseudomonadota</taxon>
        <taxon>Alphaproteobacteria</taxon>
        <taxon>Rickettsiales</taxon>
        <taxon>Rickettsiaceae</taxon>
        <taxon>Rickettsieae</taxon>
        <taxon>Rickettsia</taxon>
        <taxon>spotted fever group</taxon>
    </lineage>
</organism>
<protein>
    <recommendedName>
        <fullName evidence="1">Elongation factor Ts</fullName>
        <shortName evidence="1">EF-Ts</shortName>
    </recommendedName>
</protein>
<accession>A8F0J0</accession>
<dbReference type="EMBL" id="CP000683">
    <property type="protein sequence ID" value="ABV84426.1"/>
    <property type="molecule type" value="Genomic_DNA"/>
</dbReference>
<dbReference type="RefSeq" id="WP_012152406.1">
    <property type="nucleotide sequence ID" value="NC_009900.1"/>
</dbReference>
<dbReference type="SMR" id="A8F0J0"/>
<dbReference type="KEGG" id="rms:RMA_0122"/>
<dbReference type="HOGENOM" id="CLU_047155_2_0_5"/>
<dbReference type="Proteomes" id="UP000001311">
    <property type="component" value="Chromosome"/>
</dbReference>
<dbReference type="GO" id="GO:0005737">
    <property type="term" value="C:cytoplasm"/>
    <property type="evidence" value="ECO:0007669"/>
    <property type="project" value="UniProtKB-SubCell"/>
</dbReference>
<dbReference type="GO" id="GO:0003746">
    <property type="term" value="F:translation elongation factor activity"/>
    <property type="evidence" value="ECO:0007669"/>
    <property type="project" value="UniProtKB-UniRule"/>
</dbReference>
<dbReference type="CDD" id="cd14275">
    <property type="entry name" value="UBA_EF-Ts"/>
    <property type="match status" value="1"/>
</dbReference>
<dbReference type="FunFam" id="1.10.286.20:FF:000001">
    <property type="entry name" value="Elongation factor Ts"/>
    <property type="match status" value="1"/>
</dbReference>
<dbReference type="FunFam" id="1.10.8.10:FF:000001">
    <property type="entry name" value="Elongation factor Ts"/>
    <property type="match status" value="1"/>
</dbReference>
<dbReference type="Gene3D" id="1.10.286.20">
    <property type="match status" value="1"/>
</dbReference>
<dbReference type="Gene3D" id="1.10.8.10">
    <property type="entry name" value="DNA helicase RuvA subunit, C-terminal domain"/>
    <property type="match status" value="1"/>
</dbReference>
<dbReference type="Gene3D" id="3.30.479.20">
    <property type="entry name" value="Elongation factor Ts, dimerisation domain"/>
    <property type="match status" value="2"/>
</dbReference>
<dbReference type="HAMAP" id="MF_00050">
    <property type="entry name" value="EF_Ts"/>
    <property type="match status" value="1"/>
</dbReference>
<dbReference type="InterPro" id="IPR036402">
    <property type="entry name" value="EF-Ts_dimer_sf"/>
</dbReference>
<dbReference type="InterPro" id="IPR001816">
    <property type="entry name" value="Transl_elong_EFTs/EF1B"/>
</dbReference>
<dbReference type="InterPro" id="IPR014039">
    <property type="entry name" value="Transl_elong_EFTs/EF1B_dimer"/>
</dbReference>
<dbReference type="InterPro" id="IPR018101">
    <property type="entry name" value="Transl_elong_Ts_CS"/>
</dbReference>
<dbReference type="InterPro" id="IPR009060">
    <property type="entry name" value="UBA-like_sf"/>
</dbReference>
<dbReference type="NCBIfam" id="TIGR00116">
    <property type="entry name" value="tsf"/>
    <property type="match status" value="1"/>
</dbReference>
<dbReference type="PANTHER" id="PTHR11741">
    <property type="entry name" value="ELONGATION FACTOR TS"/>
    <property type="match status" value="1"/>
</dbReference>
<dbReference type="PANTHER" id="PTHR11741:SF0">
    <property type="entry name" value="ELONGATION FACTOR TS, MITOCHONDRIAL"/>
    <property type="match status" value="1"/>
</dbReference>
<dbReference type="Pfam" id="PF00889">
    <property type="entry name" value="EF_TS"/>
    <property type="match status" value="1"/>
</dbReference>
<dbReference type="SUPFAM" id="SSF54713">
    <property type="entry name" value="Elongation factor Ts (EF-Ts), dimerisation domain"/>
    <property type="match status" value="2"/>
</dbReference>
<dbReference type="SUPFAM" id="SSF46934">
    <property type="entry name" value="UBA-like"/>
    <property type="match status" value="1"/>
</dbReference>
<dbReference type="PROSITE" id="PS01126">
    <property type="entry name" value="EF_TS_1"/>
    <property type="match status" value="1"/>
</dbReference>
<dbReference type="PROSITE" id="PS01127">
    <property type="entry name" value="EF_TS_2"/>
    <property type="match status" value="1"/>
</dbReference>
<feature type="chain" id="PRO_1000057358" description="Elongation factor Ts">
    <location>
        <begin position="1"/>
        <end position="309"/>
    </location>
</feature>
<feature type="region of interest" description="Involved in Mg(2+) ion dislocation from EF-Tu" evidence="1">
    <location>
        <begin position="82"/>
        <end position="85"/>
    </location>
</feature>
<reference key="1">
    <citation type="journal article" date="2007" name="Genome Res.">
        <title>Lateral gene transfer between obligate intracellular bacteria: evidence from the Rickettsia massiliae genome.</title>
        <authorList>
            <person name="Blanc G."/>
            <person name="Ogata H."/>
            <person name="Robert C."/>
            <person name="Audic S."/>
            <person name="Claverie J.-M."/>
            <person name="Raoult D."/>
        </authorList>
    </citation>
    <scope>NUCLEOTIDE SEQUENCE [LARGE SCALE GENOMIC DNA]</scope>
    <source>
        <strain>Mtu5</strain>
    </source>
</reference>
<sequence>MSEINISAAAVKELREKTGAGMMDCKKALIETSGNFEEAIDFLRKKGLAVAAKKAGRIASEGLTAAKVDGLTGVVIEVNSETDFVARNEQFQALVKDIANLAVIAKTIDTLKTFKMQSGKSVEEEIIENIATIGENLTLRRMDILEISEGAIGSYVHNEVVPNLGKISVLVGLASNAKDKAKLEALAKQIAVHVAGNNPQSIDDSGLDQALVERERKVFFEKSKEEGKPDNIIEKMVEGRIRKFFSEVVLLQQNFLFEPKLTVAEVIKNAEKELGAAIKIAKFIRYELGEGIEHGEKNFADEVAAITQG</sequence>
<gene>
    <name evidence="1" type="primary">tsf</name>
    <name type="ordered locus">RMA_0122</name>
</gene>
<name>EFTS_RICM5</name>
<evidence type="ECO:0000255" key="1">
    <source>
        <dbReference type="HAMAP-Rule" id="MF_00050"/>
    </source>
</evidence>